<proteinExistence type="inferred from homology"/>
<organism>
    <name type="scientific">Vibrio vulnificus (strain YJ016)</name>
    <dbReference type="NCBI Taxonomy" id="196600"/>
    <lineage>
        <taxon>Bacteria</taxon>
        <taxon>Pseudomonadati</taxon>
        <taxon>Pseudomonadota</taxon>
        <taxon>Gammaproteobacteria</taxon>
        <taxon>Vibrionales</taxon>
        <taxon>Vibrionaceae</taxon>
        <taxon>Vibrio</taxon>
    </lineage>
</organism>
<sequence>MKVIEGGFPAPNAKIAIVISRFNSFINESLLSGAIDTLKRHGQVSEDNITVVRCPGAVELPLVAQRVAKTGKFDAIVSLGSVIRGGTPHFDYVCSEMNKGLAQVSLEFSIPVAFGVLTVDTIDQAIERAGTKAGNKGAEAALSALEMINVLSEIDS</sequence>
<feature type="chain" id="PRO_0000134830" description="6,7-dimethyl-8-ribityllumazine synthase">
    <location>
        <begin position="1"/>
        <end position="156"/>
    </location>
</feature>
<feature type="active site" description="Proton donor" evidence="1">
    <location>
        <position position="89"/>
    </location>
</feature>
<feature type="binding site" evidence="1">
    <location>
        <position position="22"/>
    </location>
    <ligand>
        <name>5-amino-6-(D-ribitylamino)uracil</name>
        <dbReference type="ChEBI" id="CHEBI:15934"/>
    </ligand>
</feature>
<feature type="binding site" evidence="1">
    <location>
        <begin position="57"/>
        <end position="59"/>
    </location>
    <ligand>
        <name>5-amino-6-(D-ribitylamino)uracil</name>
        <dbReference type="ChEBI" id="CHEBI:15934"/>
    </ligand>
</feature>
<feature type="binding site" evidence="1">
    <location>
        <begin position="81"/>
        <end position="83"/>
    </location>
    <ligand>
        <name>5-amino-6-(D-ribitylamino)uracil</name>
        <dbReference type="ChEBI" id="CHEBI:15934"/>
    </ligand>
</feature>
<feature type="binding site" evidence="1">
    <location>
        <begin position="86"/>
        <end position="87"/>
    </location>
    <ligand>
        <name>(2S)-2-hydroxy-3-oxobutyl phosphate</name>
        <dbReference type="ChEBI" id="CHEBI:58830"/>
    </ligand>
</feature>
<feature type="binding site" evidence="1">
    <location>
        <position position="114"/>
    </location>
    <ligand>
        <name>5-amino-6-(D-ribitylamino)uracil</name>
        <dbReference type="ChEBI" id="CHEBI:15934"/>
    </ligand>
</feature>
<feature type="binding site" evidence="1">
    <location>
        <position position="128"/>
    </location>
    <ligand>
        <name>(2S)-2-hydroxy-3-oxobutyl phosphate</name>
        <dbReference type="ChEBI" id="CHEBI:58830"/>
    </ligand>
</feature>
<accession>Q7MN53</accession>
<gene>
    <name evidence="1" type="primary">ribH</name>
    <name type="ordered locus">VV0864</name>
</gene>
<dbReference type="EC" id="2.5.1.78" evidence="1"/>
<dbReference type="EMBL" id="BA000037">
    <property type="protein sequence ID" value="BAC93628.1"/>
    <property type="status" value="ALT_INIT"/>
    <property type="molecule type" value="Genomic_DNA"/>
</dbReference>
<dbReference type="SMR" id="Q7MN53"/>
<dbReference type="STRING" id="672.VV93_v1c08030"/>
<dbReference type="KEGG" id="vvy:VV0864"/>
<dbReference type="eggNOG" id="COG0054">
    <property type="taxonomic scope" value="Bacteria"/>
</dbReference>
<dbReference type="HOGENOM" id="CLU_089358_1_1_6"/>
<dbReference type="UniPathway" id="UPA00275">
    <property type="reaction ID" value="UER00404"/>
</dbReference>
<dbReference type="Proteomes" id="UP000002675">
    <property type="component" value="Chromosome I"/>
</dbReference>
<dbReference type="GO" id="GO:0005829">
    <property type="term" value="C:cytosol"/>
    <property type="evidence" value="ECO:0007669"/>
    <property type="project" value="TreeGrafter"/>
</dbReference>
<dbReference type="GO" id="GO:0009349">
    <property type="term" value="C:riboflavin synthase complex"/>
    <property type="evidence" value="ECO:0007669"/>
    <property type="project" value="InterPro"/>
</dbReference>
<dbReference type="GO" id="GO:0000906">
    <property type="term" value="F:6,7-dimethyl-8-ribityllumazine synthase activity"/>
    <property type="evidence" value="ECO:0007669"/>
    <property type="project" value="UniProtKB-UniRule"/>
</dbReference>
<dbReference type="GO" id="GO:0009231">
    <property type="term" value="P:riboflavin biosynthetic process"/>
    <property type="evidence" value="ECO:0007669"/>
    <property type="project" value="UniProtKB-UniRule"/>
</dbReference>
<dbReference type="CDD" id="cd09209">
    <property type="entry name" value="Lumazine_synthase-I"/>
    <property type="match status" value="1"/>
</dbReference>
<dbReference type="FunFam" id="3.40.50.960:FF:000001">
    <property type="entry name" value="6,7-dimethyl-8-ribityllumazine synthase"/>
    <property type="match status" value="1"/>
</dbReference>
<dbReference type="Gene3D" id="3.40.50.960">
    <property type="entry name" value="Lumazine/riboflavin synthase"/>
    <property type="match status" value="1"/>
</dbReference>
<dbReference type="HAMAP" id="MF_00178">
    <property type="entry name" value="Lumazine_synth"/>
    <property type="match status" value="1"/>
</dbReference>
<dbReference type="InterPro" id="IPR034964">
    <property type="entry name" value="LS"/>
</dbReference>
<dbReference type="InterPro" id="IPR002180">
    <property type="entry name" value="LS/RS"/>
</dbReference>
<dbReference type="InterPro" id="IPR036467">
    <property type="entry name" value="LS/RS_sf"/>
</dbReference>
<dbReference type="NCBIfam" id="TIGR00114">
    <property type="entry name" value="lumazine-synth"/>
    <property type="match status" value="1"/>
</dbReference>
<dbReference type="NCBIfam" id="NF000812">
    <property type="entry name" value="PRK00061.1-4"/>
    <property type="match status" value="1"/>
</dbReference>
<dbReference type="PANTHER" id="PTHR21058:SF0">
    <property type="entry name" value="6,7-DIMETHYL-8-RIBITYLLUMAZINE SYNTHASE"/>
    <property type="match status" value="1"/>
</dbReference>
<dbReference type="PANTHER" id="PTHR21058">
    <property type="entry name" value="6,7-DIMETHYL-8-RIBITYLLUMAZINE SYNTHASE DMRL SYNTHASE LUMAZINE SYNTHASE"/>
    <property type="match status" value="1"/>
</dbReference>
<dbReference type="Pfam" id="PF00885">
    <property type="entry name" value="DMRL_synthase"/>
    <property type="match status" value="1"/>
</dbReference>
<dbReference type="SUPFAM" id="SSF52121">
    <property type="entry name" value="Lumazine synthase"/>
    <property type="match status" value="1"/>
</dbReference>
<evidence type="ECO:0000255" key="1">
    <source>
        <dbReference type="HAMAP-Rule" id="MF_00178"/>
    </source>
</evidence>
<evidence type="ECO:0000305" key="2"/>
<reference key="1">
    <citation type="journal article" date="2003" name="Genome Res.">
        <title>Comparative genome analysis of Vibrio vulnificus, a marine pathogen.</title>
        <authorList>
            <person name="Chen C.-Y."/>
            <person name="Wu K.-M."/>
            <person name="Chang Y.-C."/>
            <person name="Chang C.-H."/>
            <person name="Tsai H.-C."/>
            <person name="Liao T.-L."/>
            <person name="Liu Y.-M."/>
            <person name="Chen H.-J."/>
            <person name="Shen A.B.-T."/>
            <person name="Li J.-C."/>
            <person name="Su T.-L."/>
            <person name="Shao C.-P."/>
            <person name="Lee C.-T."/>
            <person name="Hor L.-I."/>
            <person name="Tsai S.-F."/>
        </authorList>
    </citation>
    <scope>NUCLEOTIDE SEQUENCE [LARGE SCALE GENOMIC DNA]</scope>
    <source>
        <strain>YJ016</strain>
    </source>
</reference>
<protein>
    <recommendedName>
        <fullName evidence="1">6,7-dimethyl-8-ribityllumazine synthase</fullName>
        <shortName evidence="1">DMRL synthase</shortName>
        <shortName evidence="1">LS</shortName>
        <shortName evidence="1">Lumazine synthase</shortName>
        <ecNumber evidence="1">2.5.1.78</ecNumber>
    </recommendedName>
</protein>
<keyword id="KW-0686">Riboflavin biosynthesis</keyword>
<keyword id="KW-0808">Transferase</keyword>
<comment type="function">
    <text evidence="1">Catalyzes the formation of 6,7-dimethyl-8-ribityllumazine by condensation of 5-amino-6-(D-ribitylamino)uracil with 3,4-dihydroxy-2-butanone 4-phosphate. This is the penultimate step in the biosynthesis of riboflavin.</text>
</comment>
<comment type="catalytic activity">
    <reaction evidence="1">
        <text>(2S)-2-hydroxy-3-oxobutyl phosphate + 5-amino-6-(D-ribitylamino)uracil = 6,7-dimethyl-8-(1-D-ribityl)lumazine + phosphate + 2 H2O + H(+)</text>
        <dbReference type="Rhea" id="RHEA:26152"/>
        <dbReference type="ChEBI" id="CHEBI:15377"/>
        <dbReference type="ChEBI" id="CHEBI:15378"/>
        <dbReference type="ChEBI" id="CHEBI:15934"/>
        <dbReference type="ChEBI" id="CHEBI:43474"/>
        <dbReference type="ChEBI" id="CHEBI:58201"/>
        <dbReference type="ChEBI" id="CHEBI:58830"/>
        <dbReference type="EC" id="2.5.1.78"/>
    </reaction>
</comment>
<comment type="pathway">
    <text evidence="1">Cofactor biosynthesis; riboflavin biosynthesis; riboflavin from 2-hydroxy-3-oxobutyl phosphate and 5-amino-6-(D-ribitylamino)uracil: step 1/2.</text>
</comment>
<comment type="subunit">
    <text evidence="1">Forms an icosahedral capsid composed of 60 subunits, arranged as a dodecamer of pentamers.</text>
</comment>
<comment type="similarity">
    <text evidence="1">Belongs to the DMRL synthase family.</text>
</comment>
<comment type="sequence caution" evidence="2">
    <conflict type="erroneous initiation">
        <sequence resource="EMBL-CDS" id="BAC93628"/>
    </conflict>
</comment>
<name>RISB_VIBVY</name>